<gene>
    <name evidence="9" type="primary">aflG</name>
    <name evidence="11" type="synonym">avnA</name>
    <name evidence="11" type="synonym">cyp60a1</name>
    <name evidence="10" type="synonym">ord-1</name>
    <name type="ORF">P875_00052996-2</name>
</gene>
<evidence type="ECO:0000250" key="1">
    <source>
        <dbReference type="UniProtKB" id="P04798"/>
    </source>
</evidence>
<evidence type="ECO:0000255" key="2"/>
<evidence type="ECO:0000255" key="3">
    <source>
        <dbReference type="PROSITE-ProRule" id="PRU00498"/>
    </source>
</evidence>
<evidence type="ECO:0000269" key="4">
    <source>
    </source>
</evidence>
<evidence type="ECO:0000269" key="5">
    <source>
    </source>
</evidence>
<evidence type="ECO:0000269" key="6">
    <source>
    </source>
</evidence>
<evidence type="ECO:0000269" key="7">
    <source>
    </source>
</evidence>
<evidence type="ECO:0000269" key="8">
    <source>
    </source>
</evidence>
<evidence type="ECO:0000303" key="9">
    <source>
    </source>
</evidence>
<evidence type="ECO:0000303" key="10">
    <source>
    </source>
</evidence>
<evidence type="ECO:0000303" key="11">
    <source>
    </source>
</evidence>
<evidence type="ECO:0000305" key="12"/>
<evidence type="ECO:0000305" key="13">
    <source>
    </source>
</evidence>
<evidence type="ECO:0000305" key="14">
    <source>
    </source>
</evidence>
<proteinExistence type="evidence at protein level"/>
<name>AFLG_ASPPU</name>
<feature type="chain" id="PRO_0000052047" description="Averantin hydroxylase">
    <location>
        <begin position="1"/>
        <end position="495"/>
    </location>
</feature>
<feature type="transmembrane region" description="Helical" evidence="2">
    <location>
        <begin position="12"/>
        <end position="32"/>
    </location>
</feature>
<feature type="binding site" description="axial binding residue" evidence="1">
    <location>
        <position position="436"/>
    </location>
    <ligand>
        <name>heme</name>
        <dbReference type="ChEBI" id="CHEBI:30413"/>
    </ligand>
    <ligandPart>
        <name>Fe</name>
        <dbReference type="ChEBI" id="CHEBI:18248"/>
    </ligandPart>
</feature>
<feature type="glycosylation site" description="N-linked (GlcNAc...) asparagine" evidence="3">
    <location>
        <position position="258"/>
    </location>
</feature>
<feature type="glycosylation site" description="N-linked (GlcNAc...) asparagine" evidence="3">
    <location>
        <position position="289"/>
    </location>
</feature>
<feature type="sequence conflict" description="In Ref. 4; AAB52228/AAA87598." evidence="12" ref="4">
    <original>PLD</original>
    <variation>SG</variation>
    <location>
        <begin position="168"/>
        <end position="170"/>
    </location>
</feature>
<feature type="sequence conflict" description="In Ref. 4; AAB52228/AAA87598." evidence="12" ref="4">
    <original>G</original>
    <variation>I</variation>
    <location>
        <position position="307"/>
    </location>
</feature>
<feature type="sequence conflict" description="In Ref. 4; AAB52228/AAA87598." evidence="12" ref="4">
    <original>KPLWVTLEPRNE</original>
    <variation>NRCGLRWNLAMSSSS</variation>
    <location>
        <begin position="484"/>
        <end position="495"/>
    </location>
</feature>
<accession>Q12732</accession>
<accession>A0A0F0I0Q6</accession>
<accession>O43104</accession>
<organism>
    <name type="scientific">Aspergillus parasiticus (strain ATCC 56775 / NRRL 5862 / SRRC 143 / SU-1)</name>
    <dbReference type="NCBI Taxonomy" id="1403190"/>
    <lineage>
        <taxon>Eukaryota</taxon>
        <taxon>Fungi</taxon>
        <taxon>Dikarya</taxon>
        <taxon>Ascomycota</taxon>
        <taxon>Pezizomycotina</taxon>
        <taxon>Eurotiomycetes</taxon>
        <taxon>Eurotiomycetidae</taxon>
        <taxon>Eurotiales</taxon>
        <taxon>Aspergillaceae</taxon>
        <taxon>Aspergillus</taxon>
        <taxon>Aspergillus subgen. Circumdati</taxon>
    </lineage>
</organism>
<reference key="1">
    <citation type="journal article" date="1997" name="Appl. Environ. Microbiol.">
        <title>avnA, a gene encoding a cytochrome P-450 monooxygenase, is involved in the conversion of averantin to averufin in aflatoxin biosynthesis in Aspergillus parasiticus.</title>
        <authorList>
            <person name="Yu J."/>
            <person name="Chang P.-K."/>
            <person name="Cary J.W."/>
            <person name="Bhatnagar D."/>
            <person name="Cleveland T.E."/>
        </authorList>
    </citation>
    <scope>NUCLEOTIDE SEQUENCE [GENOMIC DNA]</scope>
    <scope>DISRUPTION PHENOTYPE</scope>
    <scope>FUNCTION</scope>
    <source>
        <strain>ATCC 56775 / NRRL 5862 / SRRC 143 / SU-1</strain>
    </source>
</reference>
<reference key="2">
    <citation type="journal article" date="2004" name="FEBS Lett.">
        <title>Completed sequence of aflatoxin pathway gene cluster in Aspergillus parasiticus.</title>
        <authorList>
            <person name="Yu J."/>
            <person name="Bhatnagar D."/>
            <person name="Cleveland T.E."/>
        </authorList>
    </citation>
    <scope>NUCLEOTIDE SEQUENCE [GENOMIC DNA]</scope>
    <scope>FUNCTION</scope>
    <scope>PATHWAY</scope>
    <source>
        <strain>ATCC 56775 / NRRL 5862 / SRRC 143 / SU-1</strain>
    </source>
</reference>
<reference key="3">
    <citation type="submission" date="2015-02" db="EMBL/GenBank/DDBJ databases">
        <title>Draft genome sequence of Aspergillus parasiticus SU-1.</title>
        <authorList>
            <person name="Yu J."/>
            <person name="Fedorova N."/>
            <person name="Yin Y."/>
            <person name="Losada L."/>
            <person name="Zafar N."/>
            <person name="Taujale R."/>
            <person name="Ehrlich K.C."/>
            <person name="Bhatnagar D."/>
            <person name="Cleveland T.E."/>
            <person name="Bennett J.W."/>
            <person name="Nierman W.C."/>
        </authorList>
    </citation>
    <scope>NUCLEOTIDE SEQUENCE [LARGE SCALE GENOMIC DNA]</scope>
    <source>
        <strain>ATCC 56775 / NRRL 5862 / SRRC 143 / SU-1</strain>
    </source>
</reference>
<reference key="4">
    <citation type="journal article" date="1995" name="Appl. Environ. Microbiol.">
        <title>Comparative mapping of aflatoxin pathway gene clusters in Aspergillus parasiticus and Aspergillus flavus.</title>
        <authorList>
            <person name="Yu J."/>
            <person name="Chang P.-K."/>
            <person name="Cary J.W."/>
            <person name="Wright M."/>
            <person name="Bhatnagar D."/>
            <person name="Cleveland T.E."/>
            <person name="Payne G.A."/>
            <person name="Linz J.E."/>
        </authorList>
    </citation>
    <scope>PRELIMINARY NUCLEOTIDE SEQUENCE [MRNA] OF 106-495</scope>
    <source>
        <strain>ATCC 56775 / NRRL 5862 / SRRC 143 / SU-1</strain>
    </source>
</reference>
<reference key="5">
    <citation type="journal article" date="1993" name="Appl. Environ. Microbiol.">
        <title>Stereochemistry during aflatoxin biosynthesis: conversion of norsolorinic acid to averufin.</title>
        <authorList>
            <person name="Yabe K."/>
            <person name="Matsuyama Y."/>
            <person name="Ando Y."/>
            <person name="Nakajima H."/>
            <person name="Hamasaki T."/>
        </authorList>
    </citation>
    <scope>FUNCTION</scope>
    <scope>CATALYTIC ACTIVITY</scope>
</reference>
<reference key="6">
    <citation type="journal article" date="1999" name="Gene">
        <title>Binding of the C6-zinc cluster protein, AFLR, to the promoters of aflatoxin pathway biosynthesis genes in Aspergillus parasiticus.</title>
        <authorList>
            <person name="Ehrlich K.C."/>
            <person name="Montalbano B.G."/>
            <person name="Cary J.W."/>
        </authorList>
    </citation>
    <scope>INDUCTION</scope>
</reference>
<reference key="7">
    <citation type="journal article" date="2000" name="Biochim. Biophys. Acta">
        <title>Promoter elements involved in the expression of the Aspergillus parasiticus aflatoxin biosynthesis pathway gene avnA.</title>
        <authorList>
            <person name="Cary J.W."/>
            <person name="Montalbano B.G."/>
            <person name="Ehrlich K.C."/>
        </authorList>
    </citation>
    <scope>INDUCTION</scope>
</reference>
<reference key="8">
    <citation type="journal article" date="2004" name="Appl. Environ. Microbiol.">
        <title>Clustered pathway genes in aflatoxin biosynthesis.</title>
        <authorList>
            <person name="Yu J."/>
            <person name="Chang P.K."/>
            <person name="Ehrlich K.C."/>
            <person name="Cary J.W."/>
            <person name="Bhatnagar D."/>
            <person name="Cleveland T.E."/>
            <person name="Payne G.A."/>
            <person name="Linz J.E."/>
            <person name="Woloshuk C.P."/>
            <person name="Bennett J.W."/>
        </authorList>
    </citation>
    <scope>FUNCTION</scope>
    <scope>PATHWAY</scope>
    <scope>NOMENCLATURE</scope>
</reference>
<dbReference type="EC" id="1.14.14.116" evidence="7"/>
<dbReference type="EMBL" id="AY371490">
    <property type="protein sequence ID" value="AAS66008.1"/>
    <property type="molecule type" value="Genomic_DNA"/>
</dbReference>
<dbReference type="EMBL" id="L40839">
    <property type="protein sequence ID" value="AAB52228.1"/>
    <property type="molecule type" value="mRNA"/>
</dbReference>
<dbReference type="EMBL" id="L41149">
    <property type="protein sequence ID" value="AAA87598.1"/>
    <property type="molecule type" value="mRNA"/>
</dbReference>
<dbReference type="EMBL" id="JZEE01000729">
    <property type="protein sequence ID" value="KJK60771.1"/>
    <property type="status" value="ALT_SEQ"/>
    <property type="molecule type" value="Genomic_DNA"/>
</dbReference>
<dbReference type="SMR" id="Q12732"/>
<dbReference type="STRING" id="1403190.Q12732"/>
<dbReference type="GlyCosmos" id="Q12732">
    <property type="glycosylation" value="2 sites, No reported glycans"/>
</dbReference>
<dbReference type="OrthoDB" id="1470350at2759"/>
<dbReference type="BioCyc" id="MetaCyc:MONOMER-14028"/>
<dbReference type="BRENDA" id="1.14.14.116">
    <property type="organism ID" value="523"/>
</dbReference>
<dbReference type="UniPathway" id="UPA00287"/>
<dbReference type="Proteomes" id="UP000033540">
    <property type="component" value="Unassembled WGS sequence"/>
</dbReference>
<dbReference type="GO" id="GO:0016020">
    <property type="term" value="C:membrane"/>
    <property type="evidence" value="ECO:0007669"/>
    <property type="project" value="UniProtKB-SubCell"/>
</dbReference>
<dbReference type="GO" id="GO:0140395">
    <property type="term" value="F:averantin hydroxylase activity"/>
    <property type="evidence" value="ECO:0000314"/>
    <property type="project" value="UniProt"/>
</dbReference>
<dbReference type="GO" id="GO:0020037">
    <property type="term" value="F:heme binding"/>
    <property type="evidence" value="ECO:0007669"/>
    <property type="project" value="InterPro"/>
</dbReference>
<dbReference type="GO" id="GO:0005506">
    <property type="term" value="F:iron ion binding"/>
    <property type="evidence" value="ECO:0007669"/>
    <property type="project" value="InterPro"/>
</dbReference>
<dbReference type="GO" id="GO:0004497">
    <property type="term" value="F:monooxygenase activity"/>
    <property type="evidence" value="ECO:0007669"/>
    <property type="project" value="UniProtKB-KW"/>
</dbReference>
<dbReference type="GO" id="GO:0045122">
    <property type="term" value="P:aflatoxin biosynthetic process"/>
    <property type="evidence" value="ECO:0000314"/>
    <property type="project" value="GO_Central"/>
</dbReference>
<dbReference type="CDD" id="cd11058">
    <property type="entry name" value="CYP60B-like"/>
    <property type="match status" value="1"/>
</dbReference>
<dbReference type="FunFam" id="1.10.630.10:FF:000047">
    <property type="entry name" value="Cytochrome P450 monooxygenase"/>
    <property type="match status" value="1"/>
</dbReference>
<dbReference type="Gene3D" id="1.10.630.10">
    <property type="entry name" value="Cytochrome P450"/>
    <property type="match status" value="1"/>
</dbReference>
<dbReference type="InterPro" id="IPR001128">
    <property type="entry name" value="Cyt_P450"/>
</dbReference>
<dbReference type="InterPro" id="IPR017972">
    <property type="entry name" value="Cyt_P450_CS"/>
</dbReference>
<dbReference type="InterPro" id="IPR002401">
    <property type="entry name" value="Cyt_P450_E_grp-I"/>
</dbReference>
<dbReference type="InterPro" id="IPR036396">
    <property type="entry name" value="Cyt_P450_sf"/>
</dbReference>
<dbReference type="InterPro" id="IPR050121">
    <property type="entry name" value="Cytochrome_P450_monoxygenase"/>
</dbReference>
<dbReference type="PANTHER" id="PTHR24305">
    <property type="entry name" value="CYTOCHROME P450"/>
    <property type="match status" value="1"/>
</dbReference>
<dbReference type="PANTHER" id="PTHR24305:SF210">
    <property type="entry name" value="CYTOCHROME P450 MONOOXYGENASE ASQL-RELATED"/>
    <property type="match status" value="1"/>
</dbReference>
<dbReference type="Pfam" id="PF00067">
    <property type="entry name" value="p450"/>
    <property type="match status" value="1"/>
</dbReference>
<dbReference type="PRINTS" id="PR00463">
    <property type="entry name" value="EP450I"/>
</dbReference>
<dbReference type="PRINTS" id="PR00385">
    <property type="entry name" value="P450"/>
</dbReference>
<dbReference type="SUPFAM" id="SSF48264">
    <property type="entry name" value="Cytochrome P450"/>
    <property type="match status" value="1"/>
</dbReference>
<dbReference type="PROSITE" id="PS00086">
    <property type="entry name" value="CYTOCHROME_P450"/>
    <property type="match status" value="1"/>
</dbReference>
<protein>
    <recommendedName>
        <fullName evidence="11">Averantin hydroxylase</fullName>
        <ecNumber evidence="7">1.14.14.116</ecNumber>
    </recommendedName>
    <alternativeName>
        <fullName evidence="9">Aflatoxin biosynthesis protein G</fullName>
    </alternativeName>
    <alternativeName>
        <fullName evidence="11">Cytochrome P450 60A1</fullName>
    </alternativeName>
    <alternativeName>
        <fullName evidence="12">Cytochrome P450 monooxygenase alfG</fullName>
    </alternativeName>
</protein>
<comment type="function">
    <text evidence="7 8 13 14">Averantin hydroxylase; part of the gene cluster that mediates the biosynthesis of aflatoxins, a group of polyketide-derived furanocoumarins, and part of the most toxic and carcinogenic compounds among the known mycotoxins (PubMed:15006741, PubMed:15094053, PubMed:8368836, PubMed:9097431). The four major aflatoxins produced by A.parasiticus are aflatoxin B1 (AFB1), aflatoxin B2 (AFB2), aflatoxin G1 (AFG1) and aflatoxin G2 (AFG2) (PubMed:15006741). Within the aflatoxin pathway, the cytochrome P450 monooxygenase aflG catalyzes the hydroxylation of AVN to 5'hydroxyaverantin (HAVN) (PubMed:8368836). The biosynthesis of aflatoxins begins with the norsolorinic acid synthase aflC that combines a hexanoyl starter unit produced by the fatty acid synthase aflA/aflB and 7 malonyl-CoA extender units to synthesize the precursor NOR. The second step is the conversion of NOR to averantin and requires the norsolorinic acid ketoreductase aflD, which catalyzes the dehydration of norsolorinic acid to form (1'S)-averantin. The norsolorinic acid reductases aflE and aflF may also play a role in the conversion of NOR to AVN. The cytochrome P450 monooxygenase aflG then catalyzes the hydroxylation of AVN to 5'hydroxyaverantin (HAVN). The next step is performed by the 5'-hydroxyaverantin dehydrogenase aflH that transforms HAVN to 5'-oxoaverantin (OAVN) which is further converted to averufin (AVF) by aflK that plays a dual role in the pathway, as a 5'-oxoaverantin cyclase that mediates conversion of 5'-oxoaverantin, as well as a versicolorin B synthase in a later step in the pathway. The averufin oxidase aflI catalyzes the conversion of AVF to versiconal hemiacetal acetate (VHA). VHA is then the substrate for the versiconal hemiacetal acetate esterase aflJ to yield versiconal (VAL). Versicolorin B synthase aflK then converts VAL to versicolorin B (VERB) by closing the bisfuran ring of aflatoxin which is required for DNA-binding, thus giving to aflatoxin its activity as a mutagen. Then, the activity of the versicolorin B desaturase aflL leads to versicolorin A (VERA). A branch point starts from VERB since it can also be converted to dihydrodemethylsterigmatocystin (DMDHST), probably also by aflL, VERA being a precursor for aflatoxins B1 and G1, and DMDHST for aflatoxins B2 and G2. Next, the versicolorin reductase aflM and the cytochrome P450 monooxygenase aflN are involved in conversion of VERA to demethylsterigmatocystin (DMST). AflX and aflY seem also involved in this step, through probable aflX-mediated epoxide ring-opening step following versicolorin A oxidation and aflY-mediated Baeyer-Villiger oxidation required for the formation of the xanthone ring. The methyltransferase aflO then leads to the modification of DMST to sterigmatocystin (ST), and of DMDHST to dihydrosterigmatocystin (DHST). Both ST and DHST are then substrates of the O-methyltransferase aflP to yield O-methylsterigmatocystin (OMST) and dihydro-O-methylsterigmatocystin (DHOMST), respectively. Finally OMST is converted to aflatoxins B1 and G1, and DHOMST to aflatoxins B2 and G2, via the action of several enzymes including O-methylsterigmatocystin oxidoreductase aflQ, the cytochrome P450 monooxygenase aflU, but also the NADH-dependent flavin oxidoreductase nadA which is specifically required for the synthesis of AFG1 (PubMed:15006741).</text>
</comment>
<comment type="catalytic activity">
    <reaction evidence="7">
        <text>(1'S)-averantin + reduced [NADPH--hemoprotein reductase] + O2 = (1'S,5'R)-5'-hydroxyaverantin + oxidized [NADPH--hemoprotein reductase] + H2O</text>
        <dbReference type="Rhea" id="RHEA:35575"/>
        <dbReference type="Rhea" id="RHEA-COMP:11964"/>
        <dbReference type="Rhea" id="RHEA-COMP:11965"/>
        <dbReference type="ChEBI" id="CHEBI:15377"/>
        <dbReference type="ChEBI" id="CHEBI:15379"/>
        <dbReference type="ChEBI" id="CHEBI:57618"/>
        <dbReference type="ChEBI" id="CHEBI:58210"/>
        <dbReference type="ChEBI" id="CHEBI:71536"/>
        <dbReference type="ChEBI" id="CHEBI:77899"/>
        <dbReference type="EC" id="1.14.14.116"/>
    </reaction>
</comment>
<comment type="catalytic activity">
    <reaction evidence="7">
        <text>(1'S)-averantin + reduced [NADPH--hemoprotein reductase] + O2 = (1'S,5'S)-5'-hydroxyaverantin + oxidized [NADPH--hemoprotein reductase] + H2O + H(+)</text>
        <dbReference type="Rhea" id="RHEA:35571"/>
        <dbReference type="Rhea" id="RHEA-COMP:11964"/>
        <dbReference type="Rhea" id="RHEA-COMP:11965"/>
        <dbReference type="ChEBI" id="CHEBI:15377"/>
        <dbReference type="ChEBI" id="CHEBI:15378"/>
        <dbReference type="ChEBI" id="CHEBI:15379"/>
        <dbReference type="ChEBI" id="CHEBI:57618"/>
        <dbReference type="ChEBI" id="CHEBI:58210"/>
        <dbReference type="ChEBI" id="CHEBI:77899"/>
        <dbReference type="ChEBI" id="CHEBI:77900"/>
        <dbReference type="EC" id="1.14.14.116"/>
    </reaction>
</comment>
<comment type="cofactor">
    <cofactor evidence="1">
        <name>heme</name>
        <dbReference type="ChEBI" id="CHEBI:30413"/>
    </cofactor>
</comment>
<comment type="pathway">
    <text evidence="6">Mycotoxin biosynthesis; aflatoxin biosynthesis.</text>
</comment>
<comment type="subcellular location">
    <subcellularLocation>
        <location evidence="2">Membrane</location>
        <topology evidence="2">Single-pass membrane protein</topology>
    </subcellularLocation>
</comment>
<comment type="induction">
    <text evidence="4 5">Expression is regulated by the aflatoxin biosynthesis gene cluster transcription factor aflR that binds weakly to the sequence 5'-TCGCAGCCCGG-3' at position -110 (PubMed:10216264, PubMed:10760564).</text>
</comment>
<comment type="disruption phenotype">
    <text evidence="8">Resulted in a nonaflatoxigenic mutant which accumulates averantin, a bright yellow pigment intermediate (PubMed:9097431).</text>
</comment>
<comment type="similarity">
    <text evidence="12">Belongs to the cytochrome P450 family.</text>
</comment>
<comment type="sequence caution" evidence="12">
    <conflict type="erroneous gene model prediction">
        <sequence resource="EMBL-CDS" id="KJK60771"/>
    </conflict>
    <text>The predicted gene P875_00052996 has been split into 2 genes: P875_00052996-1 (aflL) and P875_00052996-2 (aflG).</text>
</comment>
<sequence>MGGDGWPSDGHILLLIVLTVLTPPSLALYRLWIHPLRSYPGPRWWAIWRGPYILSNIRGNLVRDLQRLHQQFGPVVRIAPNELSFIVPEAASPIYTSNPEFPKDPMHLPPFHNGTPGILAADHAHHRRYRRLLAFSFSDKGLRHERSLIERSIDLLITQLHENCGQGPLDLALWFNWATFDIIGDLAFGDSFGCLENVQTHPWIASIQGNVKLIPILNAFRRYRLDGLLRLLGSRKLLEQRRRNAQFTTDQVDRRLKNSSTPRGDIWDAVLAQKPDGEPPMTRDEMISNASAIVLAGSETSATLLSGCTWLLLKNPSHLHQLTSRIRSQFTHASEIDSQSVSRVEGLQAVLEESLRLYPPVPMQSNRIVPQAGAYIAGGWVPGGTSVGLQQFVACRSSSNFHRPDEFLPERWQGQGEFAHDRREVSQPFSIGPRNCIGRQLAYVEMRLILVKLLWHFDLRLDTTRMKDTDWLAEQGIWILWDKKPLWVTLEPRNE</sequence>
<keyword id="KW-0325">Glycoprotein</keyword>
<keyword id="KW-0349">Heme</keyword>
<keyword id="KW-0408">Iron</keyword>
<keyword id="KW-0472">Membrane</keyword>
<keyword id="KW-0479">Metal-binding</keyword>
<keyword id="KW-0503">Monooxygenase</keyword>
<keyword id="KW-0560">Oxidoreductase</keyword>
<keyword id="KW-1185">Reference proteome</keyword>
<keyword id="KW-0812">Transmembrane</keyword>
<keyword id="KW-1133">Transmembrane helix</keyword>